<keyword id="KW-0131">Cell cycle</keyword>
<keyword id="KW-0132">Cell division</keyword>
<keyword id="KW-0963">Cytoplasm</keyword>
<keyword id="KW-0238">DNA-binding</keyword>
<keyword id="KW-0717">Septation</keyword>
<protein>
    <recommendedName>
        <fullName evidence="1">Nucleoid occlusion protein</fullName>
        <shortName evidence="1">Noc</shortName>
    </recommendedName>
</protein>
<evidence type="ECO:0000255" key="1">
    <source>
        <dbReference type="HAMAP-Rule" id="MF_02015"/>
    </source>
</evidence>
<name>NOC_BACP2</name>
<sequence length="291" mass="33888">MKHSLSRFFGLGDKEHPERETEIEAEIAEHDTLKEEIQELPVDTIMPNRFQPRTIFSEEKIHELATTIHTHGIIQPIVVRPTEEEGKYELIAGERRWRAVQTLQWEKIPAIIKDFTDTETASVALIENLQREELSAIEEAHAYARLLELHDLTQEALAQRLGKGQSTVANKLRLLKLPEEVQQAILEKKISERHARSLVPLKLPELQIALLQEIIEKQLNVKQTEERVVKMLEQKTDRKPRPKRKAFSRDTRIAMNTIRQSLHMVEDSGLKINTEEEEFEEYIQLTIRIPK</sequence>
<comment type="function">
    <text evidence="1">Effects nucleoid occlusion by binding relatively nonspecifically to DNA and preventing the assembly of the division machinery in the vicinity of the nucleoid, especially under conditions that disturb the cell cycle. It helps to coordinate cell division and chromosome segregation by preventing the formation of the Z ring through the nucleoid, which would cause chromosome breakage.</text>
</comment>
<comment type="subcellular location">
    <subcellularLocation>
        <location evidence="1">Cytoplasm</location>
        <location evidence="1">Nucleoid</location>
    </subcellularLocation>
</comment>
<comment type="similarity">
    <text evidence="1">Belongs to the ParB family.</text>
</comment>
<dbReference type="EMBL" id="CP000813">
    <property type="protein sequence ID" value="ABV64374.1"/>
    <property type="molecule type" value="Genomic_DNA"/>
</dbReference>
<dbReference type="RefSeq" id="WP_012011918.1">
    <property type="nucleotide sequence ID" value="NC_009848.4"/>
</dbReference>
<dbReference type="SMR" id="A8FJF7"/>
<dbReference type="STRING" id="315750.BPUM_3730"/>
<dbReference type="GeneID" id="5623023"/>
<dbReference type="KEGG" id="bpu:BPUM_3730"/>
<dbReference type="eggNOG" id="COG1475">
    <property type="taxonomic scope" value="Bacteria"/>
</dbReference>
<dbReference type="HOGENOM" id="CLU_023853_0_1_9"/>
<dbReference type="OrthoDB" id="9802051at2"/>
<dbReference type="Proteomes" id="UP000001355">
    <property type="component" value="Chromosome"/>
</dbReference>
<dbReference type="GO" id="GO:0005694">
    <property type="term" value="C:chromosome"/>
    <property type="evidence" value="ECO:0007669"/>
    <property type="project" value="TreeGrafter"/>
</dbReference>
<dbReference type="GO" id="GO:0005737">
    <property type="term" value="C:cytoplasm"/>
    <property type="evidence" value="ECO:0007669"/>
    <property type="project" value="UniProtKB-UniRule"/>
</dbReference>
<dbReference type="GO" id="GO:0009295">
    <property type="term" value="C:nucleoid"/>
    <property type="evidence" value="ECO:0007669"/>
    <property type="project" value="UniProtKB-SubCell"/>
</dbReference>
<dbReference type="GO" id="GO:0003677">
    <property type="term" value="F:DNA binding"/>
    <property type="evidence" value="ECO:0007669"/>
    <property type="project" value="UniProtKB-UniRule"/>
</dbReference>
<dbReference type="GO" id="GO:0007059">
    <property type="term" value="P:chromosome segregation"/>
    <property type="evidence" value="ECO:0007669"/>
    <property type="project" value="TreeGrafter"/>
</dbReference>
<dbReference type="GO" id="GO:0000917">
    <property type="term" value="P:division septum assembly"/>
    <property type="evidence" value="ECO:0007669"/>
    <property type="project" value="UniProtKB-KW"/>
</dbReference>
<dbReference type="GO" id="GO:0045881">
    <property type="term" value="P:positive regulation of sporulation resulting in formation of a cellular spore"/>
    <property type="evidence" value="ECO:0007669"/>
    <property type="project" value="TreeGrafter"/>
</dbReference>
<dbReference type="CDD" id="cd16393">
    <property type="entry name" value="SPO0J_N"/>
    <property type="match status" value="1"/>
</dbReference>
<dbReference type="FunFam" id="1.10.10.2830:FF:000001">
    <property type="entry name" value="Chromosome partitioning protein ParB"/>
    <property type="match status" value="1"/>
</dbReference>
<dbReference type="FunFam" id="3.90.1530.30:FF:000001">
    <property type="entry name" value="Chromosome partitioning protein ParB"/>
    <property type="match status" value="1"/>
</dbReference>
<dbReference type="Gene3D" id="1.10.10.2830">
    <property type="match status" value="1"/>
</dbReference>
<dbReference type="Gene3D" id="3.90.1530.30">
    <property type="match status" value="1"/>
</dbReference>
<dbReference type="HAMAP" id="MF_02015">
    <property type="entry name" value="ParB_Noc"/>
    <property type="match status" value="1"/>
</dbReference>
<dbReference type="InterPro" id="IPR050336">
    <property type="entry name" value="Chromosome_partition/occlusion"/>
</dbReference>
<dbReference type="InterPro" id="IPR041468">
    <property type="entry name" value="HTH_ParB/Spo0J"/>
</dbReference>
<dbReference type="InterPro" id="IPR023705">
    <property type="entry name" value="Nucleoid_occlusion_protein"/>
</dbReference>
<dbReference type="InterPro" id="IPR004437">
    <property type="entry name" value="ParB/RepB/Spo0J"/>
</dbReference>
<dbReference type="InterPro" id="IPR003115">
    <property type="entry name" value="ParB/Sulfiredoxin_dom"/>
</dbReference>
<dbReference type="InterPro" id="IPR036086">
    <property type="entry name" value="ParB/Sulfiredoxin_sf"/>
</dbReference>
<dbReference type="NCBIfam" id="TIGR04285">
    <property type="entry name" value="nucleoid_noc"/>
    <property type="match status" value="1"/>
</dbReference>
<dbReference type="NCBIfam" id="TIGR00180">
    <property type="entry name" value="parB_part"/>
    <property type="match status" value="1"/>
</dbReference>
<dbReference type="PANTHER" id="PTHR33375">
    <property type="entry name" value="CHROMOSOME-PARTITIONING PROTEIN PARB-RELATED"/>
    <property type="match status" value="1"/>
</dbReference>
<dbReference type="PANTHER" id="PTHR33375:SF8">
    <property type="entry name" value="NUCLEOID OCCLUSION PROTEIN"/>
    <property type="match status" value="1"/>
</dbReference>
<dbReference type="Pfam" id="PF17762">
    <property type="entry name" value="HTH_ParB"/>
    <property type="match status" value="1"/>
</dbReference>
<dbReference type="Pfam" id="PF02195">
    <property type="entry name" value="ParBc"/>
    <property type="match status" value="1"/>
</dbReference>
<dbReference type="SMART" id="SM00470">
    <property type="entry name" value="ParB"/>
    <property type="match status" value="1"/>
</dbReference>
<dbReference type="SUPFAM" id="SSF109709">
    <property type="entry name" value="KorB DNA-binding domain-like"/>
    <property type="match status" value="1"/>
</dbReference>
<dbReference type="SUPFAM" id="SSF110849">
    <property type="entry name" value="ParB/Sulfiredoxin"/>
    <property type="match status" value="1"/>
</dbReference>
<reference key="1">
    <citation type="journal article" date="2007" name="PLoS ONE">
        <title>Paradoxical DNA repair and peroxide resistance gene conservation in Bacillus pumilus SAFR-032.</title>
        <authorList>
            <person name="Gioia J."/>
            <person name="Yerrapragada S."/>
            <person name="Qin X."/>
            <person name="Jiang H."/>
            <person name="Igboeli O.C."/>
            <person name="Muzny D."/>
            <person name="Dugan-Rocha S."/>
            <person name="Ding Y."/>
            <person name="Hawes A."/>
            <person name="Liu W."/>
            <person name="Perez L."/>
            <person name="Kovar C."/>
            <person name="Dinh H."/>
            <person name="Lee S."/>
            <person name="Nazareth L."/>
            <person name="Blyth P."/>
            <person name="Holder M."/>
            <person name="Buhay C."/>
            <person name="Tirumalai M.R."/>
            <person name="Liu Y."/>
            <person name="Dasgupta I."/>
            <person name="Bokhetache L."/>
            <person name="Fujita M."/>
            <person name="Karouia F."/>
            <person name="Eswara Moorthy P."/>
            <person name="Siefert J."/>
            <person name="Uzman A."/>
            <person name="Buzumbo P."/>
            <person name="Verma A."/>
            <person name="Zwiya H."/>
            <person name="McWilliams B.D."/>
            <person name="Olowu A."/>
            <person name="Clinkenbeard K.D."/>
            <person name="Newcombe D."/>
            <person name="Golebiewski L."/>
            <person name="Petrosino J.F."/>
            <person name="Nicholson W.L."/>
            <person name="Fox G.E."/>
            <person name="Venkateswaran K."/>
            <person name="Highlander S.K."/>
            <person name="Weinstock G.M."/>
        </authorList>
    </citation>
    <scope>NUCLEOTIDE SEQUENCE [LARGE SCALE GENOMIC DNA]</scope>
    <source>
        <strain>SAFR-032</strain>
    </source>
</reference>
<accession>A8FJF7</accession>
<organism>
    <name type="scientific">Bacillus pumilus (strain SAFR-032)</name>
    <dbReference type="NCBI Taxonomy" id="315750"/>
    <lineage>
        <taxon>Bacteria</taxon>
        <taxon>Bacillati</taxon>
        <taxon>Bacillota</taxon>
        <taxon>Bacilli</taxon>
        <taxon>Bacillales</taxon>
        <taxon>Bacillaceae</taxon>
        <taxon>Bacillus</taxon>
    </lineage>
</organism>
<proteinExistence type="inferred from homology"/>
<gene>
    <name evidence="1" type="primary">noc</name>
    <name type="ordered locus">BPUM_3730</name>
</gene>
<feature type="chain" id="PRO_0000346625" description="Nucleoid occlusion protein">
    <location>
        <begin position="1"/>
        <end position="291"/>
    </location>
</feature>
<feature type="DNA-binding region" description="H-T-H motif" evidence="1">
    <location>
        <begin position="155"/>
        <end position="174"/>
    </location>
</feature>